<dbReference type="EC" id="3.6.5.n1" evidence="1"/>
<dbReference type="EMBL" id="CP000697">
    <property type="protein sequence ID" value="ABQ30489.1"/>
    <property type="molecule type" value="Genomic_DNA"/>
</dbReference>
<dbReference type="RefSeq" id="WP_011942124.1">
    <property type="nucleotide sequence ID" value="NC_009484.1"/>
</dbReference>
<dbReference type="SMR" id="A5FY07"/>
<dbReference type="STRING" id="349163.Acry_1278"/>
<dbReference type="KEGG" id="acr:Acry_1278"/>
<dbReference type="eggNOG" id="COG0481">
    <property type="taxonomic scope" value="Bacteria"/>
</dbReference>
<dbReference type="HOGENOM" id="CLU_009995_3_3_5"/>
<dbReference type="Proteomes" id="UP000000245">
    <property type="component" value="Chromosome"/>
</dbReference>
<dbReference type="GO" id="GO:0005886">
    <property type="term" value="C:plasma membrane"/>
    <property type="evidence" value="ECO:0007669"/>
    <property type="project" value="UniProtKB-SubCell"/>
</dbReference>
<dbReference type="GO" id="GO:0005525">
    <property type="term" value="F:GTP binding"/>
    <property type="evidence" value="ECO:0007669"/>
    <property type="project" value="UniProtKB-UniRule"/>
</dbReference>
<dbReference type="GO" id="GO:0003924">
    <property type="term" value="F:GTPase activity"/>
    <property type="evidence" value="ECO:0007669"/>
    <property type="project" value="UniProtKB-UniRule"/>
</dbReference>
<dbReference type="GO" id="GO:0097216">
    <property type="term" value="F:guanosine tetraphosphate binding"/>
    <property type="evidence" value="ECO:0007669"/>
    <property type="project" value="UniProtKB-ARBA"/>
</dbReference>
<dbReference type="GO" id="GO:0043022">
    <property type="term" value="F:ribosome binding"/>
    <property type="evidence" value="ECO:0007669"/>
    <property type="project" value="UniProtKB-UniRule"/>
</dbReference>
<dbReference type="GO" id="GO:0003746">
    <property type="term" value="F:translation elongation factor activity"/>
    <property type="evidence" value="ECO:0007669"/>
    <property type="project" value="UniProtKB-UniRule"/>
</dbReference>
<dbReference type="GO" id="GO:0045727">
    <property type="term" value="P:positive regulation of translation"/>
    <property type="evidence" value="ECO:0007669"/>
    <property type="project" value="UniProtKB-UniRule"/>
</dbReference>
<dbReference type="CDD" id="cd03699">
    <property type="entry name" value="EF4_II"/>
    <property type="match status" value="1"/>
</dbReference>
<dbReference type="CDD" id="cd16260">
    <property type="entry name" value="EF4_III"/>
    <property type="match status" value="1"/>
</dbReference>
<dbReference type="CDD" id="cd01890">
    <property type="entry name" value="LepA"/>
    <property type="match status" value="1"/>
</dbReference>
<dbReference type="CDD" id="cd03709">
    <property type="entry name" value="lepA_C"/>
    <property type="match status" value="1"/>
</dbReference>
<dbReference type="FunFam" id="3.40.50.300:FF:000078">
    <property type="entry name" value="Elongation factor 4"/>
    <property type="match status" value="1"/>
</dbReference>
<dbReference type="FunFam" id="2.40.30.10:FF:000015">
    <property type="entry name" value="Translation factor GUF1, mitochondrial"/>
    <property type="match status" value="1"/>
</dbReference>
<dbReference type="FunFam" id="3.30.70.240:FF:000007">
    <property type="entry name" value="Translation factor GUF1, mitochondrial"/>
    <property type="match status" value="1"/>
</dbReference>
<dbReference type="FunFam" id="3.30.70.2570:FF:000001">
    <property type="entry name" value="Translation factor GUF1, mitochondrial"/>
    <property type="match status" value="1"/>
</dbReference>
<dbReference type="FunFam" id="3.30.70.870:FF:000004">
    <property type="entry name" value="Translation factor GUF1, mitochondrial"/>
    <property type="match status" value="1"/>
</dbReference>
<dbReference type="Gene3D" id="3.30.70.240">
    <property type="match status" value="1"/>
</dbReference>
<dbReference type="Gene3D" id="3.30.70.2570">
    <property type="entry name" value="Elongation factor 4, C-terminal domain"/>
    <property type="match status" value="1"/>
</dbReference>
<dbReference type="Gene3D" id="3.30.70.870">
    <property type="entry name" value="Elongation Factor G (Translational Gtpase), domain 3"/>
    <property type="match status" value="1"/>
</dbReference>
<dbReference type="Gene3D" id="3.40.50.300">
    <property type="entry name" value="P-loop containing nucleotide triphosphate hydrolases"/>
    <property type="match status" value="1"/>
</dbReference>
<dbReference type="Gene3D" id="2.40.30.10">
    <property type="entry name" value="Translation factors"/>
    <property type="match status" value="1"/>
</dbReference>
<dbReference type="HAMAP" id="MF_00071">
    <property type="entry name" value="LepA"/>
    <property type="match status" value="1"/>
</dbReference>
<dbReference type="InterPro" id="IPR006297">
    <property type="entry name" value="EF-4"/>
</dbReference>
<dbReference type="InterPro" id="IPR035647">
    <property type="entry name" value="EFG_III/V"/>
</dbReference>
<dbReference type="InterPro" id="IPR000640">
    <property type="entry name" value="EFG_V-like"/>
</dbReference>
<dbReference type="InterPro" id="IPR004161">
    <property type="entry name" value="EFTu-like_2"/>
</dbReference>
<dbReference type="InterPro" id="IPR031157">
    <property type="entry name" value="G_TR_CS"/>
</dbReference>
<dbReference type="InterPro" id="IPR038363">
    <property type="entry name" value="LepA_C_sf"/>
</dbReference>
<dbReference type="InterPro" id="IPR013842">
    <property type="entry name" value="LepA_CTD"/>
</dbReference>
<dbReference type="InterPro" id="IPR035654">
    <property type="entry name" value="LepA_IV"/>
</dbReference>
<dbReference type="InterPro" id="IPR027417">
    <property type="entry name" value="P-loop_NTPase"/>
</dbReference>
<dbReference type="InterPro" id="IPR005225">
    <property type="entry name" value="Small_GTP-bd"/>
</dbReference>
<dbReference type="InterPro" id="IPR000795">
    <property type="entry name" value="T_Tr_GTP-bd_dom"/>
</dbReference>
<dbReference type="NCBIfam" id="TIGR01393">
    <property type="entry name" value="lepA"/>
    <property type="match status" value="1"/>
</dbReference>
<dbReference type="NCBIfam" id="TIGR00231">
    <property type="entry name" value="small_GTP"/>
    <property type="match status" value="1"/>
</dbReference>
<dbReference type="PANTHER" id="PTHR43512:SF4">
    <property type="entry name" value="TRANSLATION FACTOR GUF1 HOMOLOG, CHLOROPLASTIC"/>
    <property type="match status" value="1"/>
</dbReference>
<dbReference type="PANTHER" id="PTHR43512">
    <property type="entry name" value="TRANSLATION FACTOR GUF1-RELATED"/>
    <property type="match status" value="1"/>
</dbReference>
<dbReference type="Pfam" id="PF00679">
    <property type="entry name" value="EFG_C"/>
    <property type="match status" value="1"/>
</dbReference>
<dbReference type="Pfam" id="PF00009">
    <property type="entry name" value="GTP_EFTU"/>
    <property type="match status" value="1"/>
</dbReference>
<dbReference type="Pfam" id="PF03144">
    <property type="entry name" value="GTP_EFTU_D2"/>
    <property type="match status" value="1"/>
</dbReference>
<dbReference type="Pfam" id="PF06421">
    <property type="entry name" value="LepA_C"/>
    <property type="match status" value="1"/>
</dbReference>
<dbReference type="PRINTS" id="PR00315">
    <property type="entry name" value="ELONGATNFCT"/>
</dbReference>
<dbReference type="SMART" id="SM00838">
    <property type="entry name" value="EFG_C"/>
    <property type="match status" value="1"/>
</dbReference>
<dbReference type="SUPFAM" id="SSF54980">
    <property type="entry name" value="EF-G C-terminal domain-like"/>
    <property type="match status" value="2"/>
</dbReference>
<dbReference type="SUPFAM" id="SSF52540">
    <property type="entry name" value="P-loop containing nucleoside triphosphate hydrolases"/>
    <property type="match status" value="1"/>
</dbReference>
<dbReference type="PROSITE" id="PS00301">
    <property type="entry name" value="G_TR_1"/>
    <property type="match status" value="1"/>
</dbReference>
<dbReference type="PROSITE" id="PS51722">
    <property type="entry name" value="G_TR_2"/>
    <property type="match status" value="1"/>
</dbReference>
<feature type="chain" id="PRO_1000031959" description="Elongation factor 4">
    <location>
        <begin position="1"/>
        <end position="601"/>
    </location>
</feature>
<feature type="domain" description="tr-type G">
    <location>
        <begin position="7"/>
        <end position="189"/>
    </location>
</feature>
<feature type="binding site" evidence="1">
    <location>
        <begin position="19"/>
        <end position="24"/>
    </location>
    <ligand>
        <name>GTP</name>
        <dbReference type="ChEBI" id="CHEBI:37565"/>
    </ligand>
</feature>
<feature type="binding site" evidence="1">
    <location>
        <begin position="136"/>
        <end position="139"/>
    </location>
    <ligand>
        <name>GTP</name>
        <dbReference type="ChEBI" id="CHEBI:37565"/>
    </ligand>
</feature>
<sequence length="601" mass="66313">MTSTPTELIRNFSIIAHIDHGKSTLADRLIQTTGALSAREMTEQVLDNMDIEKERGITIKAQTVRLNYKAKDGKTYVLNLMDTPGHVDFAYEVSRSLAACEGSLLVVDASQGVEAQTLANVYQAIDANHEIVPVLNKIDLPAAEPERVKQQIEDVIGLDASDAVEISAKTGLNIEAVLEALVTRLPPPKGDETAPLKAMLVDSWYDSYLGVIILVRVRDGRLRKGQRVRMMSTGAVHTIDQVGTFSPKLTPQADLGPGEIGYITAAIKTVADCNVGDTITDDRAPATEPLPGFKPSIPVVWCGLYPVDADDFEKLRDSLAKLRLNDASFHYEAETSAALGFGFRCGFLGLLHLEIIQERLSREFDLDLIATAPSVVYRLYKTSGEMMELHNPADMPDGSVIDHIEEPWIRATIMVPDDYLGAVLTLCNERRGQQVDLTYVGNRAMAVYRLPLNEVVFDFYDRLKSVSRGYASFDYQMDDYVEGDLVKISILVNQEPVDALAFIAHRSVADTRGRAICAKLKDLIPRQLFKIAIQAAIGGRVIARETLGALSKDVTAKCYGGDISRKRKLLEKQKEGKKRMRQFGKVEIPQTAFLAALKMDA</sequence>
<reference key="1">
    <citation type="submission" date="2007-05" db="EMBL/GenBank/DDBJ databases">
        <title>Complete sequence of chromosome of Acidiphilium cryptum JF-5.</title>
        <authorList>
            <consortium name="US DOE Joint Genome Institute"/>
            <person name="Copeland A."/>
            <person name="Lucas S."/>
            <person name="Lapidus A."/>
            <person name="Barry K."/>
            <person name="Detter J.C."/>
            <person name="Glavina del Rio T."/>
            <person name="Hammon N."/>
            <person name="Israni S."/>
            <person name="Dalin E."/>
            <person name="Tice H."/>
            <person name="Pitluck S."/>
            <person name="Sims D."/>
            <person name="Brettin T."/>
            <person name="Bruce D."/>
            <person name="Han C."/>
            <person name="Schmutz J."/>
            <person name="Larimer F."/>
            <person name="Land M."/>
            <person name="Hauser L."/>
            <person name="Kyrpides N."/>
            <person name="Kim E."/>
            <person name="Magnuson T."/>
            <person name="Richardson P."/>
        </authorList>
    </citation>
    <scope>NUCLEOTIDE SEQUENCE [LARGE SCALE GENOMIC DNA]</scope>
    <source>
        <strain>JF-5</strain>
    </source>
</reference>
<gene>
    <name evidence="1" type="primary">lepA</name>
    <name type="ordered locus">Acry_1278</name>
</gene>
<proteinExistence type="inferred from homology"/>
<organism>
    <name type="scientific">Acidiphilium cryptum (strain JF-5)</name>
    <dbReference type="NCBI Taxonomy" id="349163"/>
    <lineage>
        <taxon>Bacteria</taxon>
        <taxon>Pseudomonadati</taxon>
        <taxon>Pseudomonadota</taxon>
        <taxon>Alphaproteobacteria</taxon>
        <taxon>Acetobacterales</taxon>
        <taxon>Acidocellaceae</taxon>
        <taxon>Acidiphilium</taxon>
    </lineage>
</organism>
<keyword id="KW-0997">Cell inner membrane</keyword>
<keyword id="KW-1003">Cell membrane</keyword>
<keyword id="KW-0342">GTP-binding</keyword>
<keyword id="KW-0378">Hydrolase</keyword>
<keyword id="KW-0472">Membrane</keyword>
<keyword id="KW-0547">Nucleotide-binding</keyword>
<keyword id="KW-0648">Protein biosynthesis</keyword>
<keyword id="KW-1185">Reference proteome</keyword>
<accession>A5FY07</accession>
<evidence type="ECO:0000255" key="1">
    <source>
        <dbReference type="HAMAP-Rule" id="MF_00071"/>
    </source>
</evidence>
<protein>
    <recommendedName>
        <fullName evidence="1">Elongation factor 4</fullName>
        <shortName evidence="1">EF-4</shortName>
        <ecNumber evidence="1">3.6.5.n1</ecNumber>
    </recommendedName>
    <alternativeName>
        <fullName evidence="1">Ribosomal back-translocase LepA</fullName>
    </alternativeName>
</protein>
<name>LEPA_ACICJ</name>
<comment type="function">
    <text evidence="1">Required for accurate and efficient protein synthesis under certain stress conditions. May act as a fidelity factor of the translation reaction, by catalyzing a one-codon backward translocation of tRNAs on improperly translocated ribosomes. Back-translocation proceeds from a post-translocation (POST) complex to a pre-translocation (PRE) complex, thus giving elongation factor G a second chance to translocate the tRNAs correctly. Binds to ribosomes in a GTP-dependent manner.</text>
</comment>
<comment type="catalytic activity">
    <reaction evidence="1">
        <text>GTP + H2O = GDP + phosphate + H(+)</text>
        <dbReference type="Rhea" id="RHEA:19669"/>
        <dbReference type="ChEBI" id="CHEBI:15377"/>
        <dbReference type="ChEBI" id="CHEBI:15378"/>
        <dbReference type="ChEBI" id="CHEBI:37565"/>
        <dbReference type="ChEBI" id="CHEBI:43474"/>
        <dbReference type="ChEBI" id="CHEBI:58189"/>
        <dbReference type="EC" id="3.6.5.n1"/>
    </reaction>
</comment>
<comment type="subcellular location">
    <subcellularLocation>
        <location evidence="1">Cell inner membrane</location>
        <topology evidence="1">Peripheral membrane protein</topology>
        <orientation evidence="1">Cytoplasmic side</orientation>
    </subcellularLocation>
</comment>
<comment type="similarity">
    <text evidence="1">Belongs to the TRAFAC class translation factor GTPase superfamily. Classic translation factor GTPase family. LepA subfamily.</text>
</comment>